<reference key="1">
    <citation type="journal article" date="1988" name="J. Gastroenterol. Hepatol.">
        <title>Nucleotide sequence of a hepatitis B virus genome of subtype adw isolated from a Philippino: comparison with the reported three genomes of the same subtype.</title>
        <authorList>
            <person name="Estacio R.C."/>
            <person name="Chavez C.C."/>
            <person name="Okamoto H."/>
            <person name="Lingao A.L."/>
            <person name="Reyes M.T."/>
            <person name="Domingo E."/>
            <person name="Mayumi M."/>
        </authorList>
    </citation>
    <scope>NUCLEOTIDE SEQUENCE [GENOMIC DNA]</scope>
</reference>
<reference key="2">
    <citation type="journal article" date="1996" name="Intervirology">
        <title>Functions of the large hepatitis B virus surface protein in viral particle morphogenesis.</title>
        <authorList>
            <person name="Bruss V."/>
            <person name="Gerhardt E."/>
            <person name="Vieluf K."/>
            <person name="Wunderlich G."/>
        </authorList>
    </citation>
    <scope>REVIEW</scope>
</reference>
<reference key="3">
    <citation type="journal article" date="1998" name="Adv. Exp. Med. Biol.">
        <title>Role of glycan processing in hepatitis B virus envelope protein trafficking.</title>
        <authorList>
            <person name="Block T.M."/>
            <person name="Lu X."/>
            <person name="Mehta A."/>
            <person name="Park J."/>
            <person name="Blumberg B.S."/>
            <person name="Dwek R."/>
        </authorList>
    </citation>
    <scope>REVIEW</scope>
</reference>
<reference key="4">
    <citation type="journal article" date="2004" name="Virus Res.">
        <title>Envelopment of the hepatitis B virus nucleocapsid.</title>
        <authorList>
            <person name="Bruss V."/>
        </authorList>
    </citation>
    <scope>REVIEW</scope>
</reference>
<reference key="5">
    <citation type="journal article" date="2006" name="Cancer Sci.">
        <title>Hepatitis B virus pre-S mutants, endoplasmic reticulum stress and hepatocarcinogenesis.</title>
        <authorList>
            <person name="Wang H.C."/>
            <person name="Huang W."/>
            <person name="Lai M.D."/>
            <person name="Su I.J."/>
        </authorList>
    </citation>
    <scope>REVIEW</scope>
</reference>
<gene>
    <name evidence="3" type="primary">S</name>
</gene>
<keyword id="KW-0007">Acetylation</keyword>
<keyword id="KW-0024">Alternative initiation</keyword>
<keyword id="KW-0025">Alternative splicing</keyword>
<keyword id="KW-1166">Caveolin-mediated endocytosis of virus by host</keyword>
<keyword id="KW-1170">Fusion of virus membrane with host endosomal membrane</keyword>
<keyword id="KW-1168">Fusion of virus membrane with host membrane</keyword>
<keyword id="KW-0325">Glycoprotein</keyword>
<keyword id="KW-0945">Host-virus interaction</keyword>
<keyword id="KW-0449">Lipoprotein</keyword>
<keyword id="KW-0472">Membrane</keyword>
<keyword id="KW-0519">Myristate</keyword>
<keyword id="KW-0812">Transmembrane</keyword>
<keyword id="KW-1133">Transmembrane helix</keyword>
<keyword id="KW-1161">Viral attachment to host cell</keyword>
<keyword id="KW-0261">Viral envelope protein</keyword>
<keyword id="KW-1162">Viral penetration into host cytoplasm</keyword>
<keyword id="KW-0946">Virion</keyword>
<keyword id="KW-1164">Virus endocytosis by host</keyword>
<keyword id="KW-1160">Virus entry into host cell</keyword>
<evidence type="ECO:0000250" key="1">
    <source>
        <dbReference type="UniProtKB" id="P03138"/>
    </source>
</evidence>
<evidence type="ECO:0000250" key="2">
    <source>
        <dbReference type="UniProtKB" id="P03141"/>
    </source>
</evidence>
<evidence type="ECO:0000255" key="3">
    <source>
        <dbReference type="HAMAP-Rule" id="MF_04075"/>
    </source>
</evidence>
<evidence type="ECO:0000256" key="4">
    <source>
        <dbReference type="SAM" id="MobiDB-lite"/>
    </source>
</evidence>
<evidence type="ECO:0000305" key="5"/>
<protein>
    <recommendedName>
        <fullName evidence="3">Large envelope protein</fullName>
    </recommendedName>
    <alternativeName>
        <fullName evidence="3">L glycoprotein</fullName>
    </alternativeName>
    <alternativeName>
        <fullName evidence="3">L-HBsAg</fullName>
        <shortName evidence="3">LHB</shortName>
    </alternativeName>
    <alternativeName>
        <fullName evidence="3">Large S protein</fullName>
    </alternativeName>
    <alternativeName>
        <fullName evidence="3">Large surface protein</fullName>
    </alternativeName>
    <alternativeName>
        <fullName evidence="3">Major surface antigen</fullName>
    </alternativeName>
</protein>
<accession>Q02317</accession>
<comment type="function">
    <text evidence="3">The large envelope protein exists in two topological conformations, one which is termed 'external' or Le-HBsAg and the other 'internal' or Li-HBsAg. In its external conformation the protein attaches the virus to cell receptors and thereby initiating infection. This interaction determines the species specificity and liver tropism. This attachment induces virion internalization predominantly through caveolin-mediated endocytosis. The large envelope protein also assures fusion between virion membrane and endosomal membrane. In its internal conformation the protein plays a role in virion morphogenesis and mediates the contact with the nucleocapsid like a matrix protein.</text>
</comment>
<comment type="function">
    <text evidence="3">The middle envelope protein plays an important role in the budding of the virion. It is involved in the induction of budding in a nucleocapsid independent way. In this process the majority of envelope proteins bud to form subviral lipoprotein particles of 22 nm of diameter that do not contain a nucleocapsid.</text>
</comment>
<comment type="subunit">
    <molecule>Isoform L</molecule>
    <text evidence="2">In its internal form (Li-HBsAg), interacts with the capsid protein and with the isoform S. Interacts with host chaperone CANX.</text>
</comment>
<comment type="subunit">
    <molecule>Isoform M</molecule>
    <text evidence="2">Associates with host chaperone CANX through its pre-S2 N glycan; this association may be essential for isoform M proper secretion.</text>
</comment>
<comment type="subunit">
    <molecule>Isoform S</molecule>
    <text evidence="2">Interacts with isoform L. Interacts with the antigens of satellite virus HDV (HDVAgs); this interaction is required for encapsidation of HDV genomic RNA.</text>
</comment>
<comment type="subcellular location">
    <subcellularLocation>
        <location evidence="3">Virion membrane</location>
    </subcellularLocation>
</comment>
<comment type="alternative products">
    <event type="alternative splicing"/>
    <event type="alternative initiation"/>
    <isoform>
        <id>Q02317-1</id>
        <name>L</name>
        <name>Large envelope protein</name>
        <name>LHB</name>
        <name>L-HBsAg</name>
        <sequence type="displayed"/>
    </isoform>
    <isoform>
        <id>Q02317-2</id>
        <name>M</name>
        <name>Middle envelope protein</name>
        <name>MHB</name>
        <name>M-HBsAg</name>
        <sequence type="described" ref="VSP_031359"/>
    </isoform>
    <isoform>
        <id>Q02317-3</id>
        <name>S</name>
        <name>Small envelope protein</name>
        <name>SHB</name>
        <name>S-HBsAg</name>
        <sequence type="described" ref="VSP_031358"/>
    </isoform>
</comment>
<comment type="domain">
    <text evidence="3">The large envelope protein is synthesized with the pre-S region at the cytosolic side of the endoplasmic reticulum and, hence will be within the virion after budding. Therefore the pre-S region is not N-glycosylated. Later a post-translational translocation of N-terminal pre-S and TM1 domains occur in about 50% of proteins at the virion surface. These molecules change their topology by an unknown mechanism, resulting in exposure of pre-S region at virion surface. For isoform M in contrast, the pre-S2 region is translocated cotranslationally to the endoplasmic reticulum lumen and is N-glycosylated.</text>
</comment>
<comment type="PTM">
    <text evidence="1 3">Isoform M is N-terminally acetylated by host at a ratio of 90%, and N-glycosylated by host at the pre-S2 region.</text>
</comment>
<comment type="PTM">
    <text evidence="3">Myristoylated.</text>
</comment>
<comment type="biotechnology">
    <text>Systematic vaccination of individuals at risk of exposure to the virus has been the main method of controlling the morbidity and mortality associated with hepatitis B. The first hepatitis B vaccine was manufactured by the purification and inactivation of HBsAg obtained from the plasma of chronic hepatitis B virus carriers. The vaccine is now produced by recombinant DNA techniques and expression of the S isoform in yeast cells. The pre-S region do not seem to induce strong enough antigenic response.</text>
</comment>
<comment type="similarity">
    <text evidence="3">Belongs to the orthohepadnavirus major surface antigen family.</text>
</comment>
<dbReference type="EMBL" id="M57663">
    <property type="protein sequence ID" value="AAA69680.1"/>
    <property type="molecule type" value="Genomic_DNA"/>
</dbReference>
<dbReference type="SMR" id="Q02317"/>
<dbReference type="GlyCosmos" id="Q02317">
    <property type="glycosylation" value="2 sites, No reported glycans"/>
</dbReference>
<dbReference type="Proteomes" id="UP000007908">
    <property type="component" value="Genome"/>
</dbReference>
<dbReference type="GO" id="GO:0016020">
    <property type="term" value="C:membrane"/>
    <property type="evidence" value="ECO:0007669"/>
    <property type="project" value="UniProtKB-UniRule"/>
</dbReference>
<dbReference type="GO" id="GO:0019031">
    <property type="term" value="C:viral envelope"/>
    <property type="evidence" value="ECO:0007669"/>
    <property type="project" value="UniProtKB-KW"/>
</dbReference>
<dbReference type="GO" id="GO:0055036">
    <property type="term" value="C:virion membrane"/>
    <property type="evidence" value="ECO:0007669"/>
    <property type="project" value="UniProtKB-SubCell"/>
</dbReference>
<dbReference type="GO" id="GO:0075513">
    <property type="term" value="P:caveolin-mediated endocytosis of virus by host cell"/>
    <property type="evidence" value="ECO:0007669"/>
    <property type="project" value="UniProtKB-KW"/>
</dbReference>
<dbReference type="GO" id="GO:0039654">
    <property type="term" value="P:fusion of virus membrane with host endosome membrane"/>
    <property type="evidence" value="ECO:0007669"/>
    <property type="project" value="UniProtKB-KW"/>
</dbReference>
<dbReference type="GO" id="GO:0019062">
    <property type="term" value="P:virion attachment to host cell"/>
    <property type="evidence" value="ECO:0007669"/>
    <property type="project" value="UniProtKB-UniRule"/>
</dbReference>
<dbReference type="HAMAP" id="MF_04075">
    <property type="entry name" value="HBV_HBSAG"/>
    <property type="match status" value="1"/>
</dbReference>
<dbReference type="InterPro" id="IPR000349">
    <property type="entry name" value="HBV_HBSAG"/>
</dbReference>
<dbReference type="Pfam" id="PF00695">
    <property type="entry name" value="vMSA"/>
    <property type="match status" value="1"/>
</dbReference>
<organism>
    <name type="scientific">Hepatitis B virus genotype A1 subtype adw (isolate Philippines/pFDW294/1988)</name>
    <name type="common">HBV-A</name>
    <dbReference type="NCBI Taxonomy" id="31514"/>
    <lineage>
        <taxon>Viruses</taxon>
        <taxon>Riboviria</taxon>
        <taxon>Pararnavirae</taxon>
        <taxon>Artverviricota</taxon>
        <taxon>Revtraviricetes</taxon>
        <taxon>Blubervirales</taxon>
        <taxon>Hepadnaviridae</taxon>
        <taxon>Orthohepadnavirus</taxon>
        <taxon>Hepatitis B virus</taxon>
    </lineage>
</organism>
<feature type="initiator methionine" description="Removed; by host" evidence="3">
    <location>
        <position position="1"/>
    </location>
</feature>
<feature type="chain" id="PRO_0000038105" description="Large envelope protein" evidence="3">
    <location>
        <begin position="2"/>
        <end position="400"/>
    </location>
</feature>
<feature type="topological domain" description="Intravirion; in internal conformation" evidence="3">
    <location>
        <begin position="2"/>
        <end position="253"/>
    </location>
</feature>
<feature type="topological domain" description="Virion surface; in external conformation" evidence="3">
    <location>
        <begin position="2"/>
        <end position="181"/>
    </location>
</feature>
<feature type="transmembrane region" description="Helical; Name=TM1; Note=In external conformation" evidence="3">
    <location>
        <begin position="182"/>
        <end position="202"/>
    </location>
</feature>
<feature type="topological domain" description="Intravirion; in external conformation" evidence="3">
    <location>
        <begin position="203"/>
        <end position="253"/>
    </location>
</feature>
<feature type="transmembrane region" description="Helical; Name=TM2" evidence="3">
    <location>
        <begin position="254"/>
        <end position="274"/>
    </location>
</feature>
<feature type="topological domain" description="Virion surface" evidence="3">
    <location>
        <begin position="275"/>
        <end position="348"/>
    </location>
</feature>
<feature type="transmembrane region" description="Helical" evidence="3">
    <location>
        <begin position="349"/>
        <end position="369"/>
    </location>
</feature>
<feature type="topological domain" description="Intravirion" evidence="3">
    <location>
        <begin position="370"/>
        <end position="375"/>
    </location>
</feature>
<feature type="transmembrane region" description="Helical; Name=TM3" evidence="3">
    <location>
        <begin position="376"/>
        <end position="398"/>
    </location>
</feature>
<feature type="topological domain" description="Virion surface" evidence="3">
    <location>
        <begin position="399"/>
        <end position="400"/>
    </location>
</feature>
<feature type="region of interest" description="Disordered" evidence="4">
    <location>
        <begin position="1"/>
        <end position="24"/>
    </location>
</feature>
<feature type="region of interest" description="Pre-S" evidence="3">
    <location>
        <begin position="2"/>
        <end position="174"/>
    </location>
</feature>
<feature type="region of interest" description="Pre-S1" evidence="3">
    <location>
        <begin position="2"/>
        <end position="119"/>
    </location>
</feature>
<feature type="region of interest" description="Disordered" evidence="4">
    <location>
        <begin position="89"/>
        <end position="116"/>
    </location>
</feature>
<feature type="region of interest" description="Pre-S2" evidence="3">
    <location>
        <begin position="120"/>
        <end position="174"/>
    </location>
</feature>
<feature type="compositionally biased region" description="Polar residues" evidence="4">
    <location>
        <begin position="96"/>
        <end position="106"/>
    </location>
</feature>
<feature type="lipid moiety-binding region" description="N-myristoyl glycine; by host" evidence="3">
    <location>
        <position position="2"/>
    </location>
</feature>
<feature type="glycosylation site" description="N-linked (GlcNAc...) asparagine; by host" evidence="3">
    <location>
        <position position="320"/>
    </location>
</feature>
<feature type="splice variant" id="VSP_031358" description="In isoform S." evidence="5">
    <location>
        <begin position="1"/>
        <end position="174"/>
    </location>
</feature>
<feature type="splice variant" id="VSP_031359" description="In isoform M." evidence="5">
    <location>
        <begin position="1"/>
        <end position="119"/>
    </location>
</feature>
<feature type="modified residue" description="N-acetylmethionine" evidence="5">
    <location sequence="Q02317-2">
        <position position="1"/>
    </location>
</feature>
<feature type="glycosylation site" description="N-linked (GlcNAc...) asparagine" evidence="5">
    <location sequence="Q02317-2">
        <position position="4"/>
    </location>
</feature>
<sequence>MGGWSSKPRKGMGTNLSVPNPLGFFPDHQLDPAFGANSNNPDWDFNPIKDHWPQANQVGVGAFGPGFTPPHGGVLGWSPQAQGILATVPAMPPPASTNRQSGRQPTPISPPLRDSHPQAMQWNSTAFHQALQDPRVRGLYFPAGGSSSGTLNPVPTIASHISSISSRIGDPAPNMENITSGFLGPLLVLQAGFFLLTRILTIPQSLDSWWTSLNFLGGAPVCLGQNSQSPTSNHSPTSCPPICPGYRWMCLRRFIIFLFILLLCLIFLLVLLDYQGMLPVCPLIPGSTTTSTGPCKTCTTPAQGNSMFPSCCCTKPTDGNCTCIPIPSSWAFAKYLWEWASVRFSWLSLLVPFVQWFVGLSPTVWLSAIWMMWYWGPSLYNILSPFIPLLPIFFCLWVYI</sequence>
<organismHost>
    <name type="scientific">Homo sapiens</name>
    <name type="common">Human</name>
    <dbReference type="NCBI Taxonomy" id="9606"/>
</organismHost>
<organismHost>
    <name type="scientific">Pan troglodytes</name>
    <name type="common">Chimpanzee</name>
    <dbReference type="NCBI Taxonomy" id="9598"/>
</organismHost>
<name>HBSAG_HBVA5</name>
<proteinExistence type="evidence at protein level"/>